<sequence length="38" mass="4497">MTQSNPNEQNVELNRTSLYWGLLLIFVLAVLFSNYFFN</sequence>
<evidence type="ECO:0000255" key="1">
    <source>
        <dbReference type="HAMAP-Rule" id="MF_01317"/>
    </source>
</evidence>
<accession>Q7H8L5</accession>
<gene>
    <name evidence="1" type="primary">psbL</name>
</gene>
<geneLocation type="chloroplast"/>
<comment type="function">
    <text evidence="1">One of the components of the core complex of photosystem II (PSII). PSII is a light-driven water:plastoquinone oxidoreductase that uses light energy to abstract electrons from H(2)O, generating O(2) and a proton gradient subsequently used for ATP formation. It consists of a core antenna complex that captures photons, and an electron transfer chain that converts photonic excitation into a charge separation. This subunit is found at the monomer-monomer interface and is required for correct PSII assembly and/or dimerization.</text>
</comment>
<comment type="subunit">
    <text evidence="1">PSII is composed of 1 copy each of membrane proteins PsbA, PsbB, PsbC, PsbD, PsbE, PsbF, PsbH, PsbI, PsbJ, PsbK, PsbL, PsbM, PsbT, PsbX, PsbY, PsbZ, Psb30/Ycf12, at least 3 peripheral proteins of the oxygen-evolving complex and a large number of cofactors. It forms dimeric complexes.</text>
</comment>
<comment type="subcellular location">
    <subcellularLocation>
        <location evidence="1">Plastid</location>
        <location evidence="1">Chloroplast thylakoid membrane</location>
        <topology evidence="1">Single-pass membrane protein</topology>
    </subcellularLocation>
</comment>
<comment type="similarity">
    <text evidence="1">Belongs to the PsbL family.</text>
</comment>
<feature type="chain" id="PRO_0000219728" description="Photosystem II reaction center protein L">
    <location>
        <begin position="1"/>
        <end position="38"/>
    </location>
</feature>
<feature type="transmembrane region" description="Helical" evidence="1">
    <location>
        <begin position="17"/>
        <end position="37"/>
    </location>
</feature>
<organism>
    <name type="scientific">Ipomoea coccinea</name>
    <name type="common">Scarlet morning-glory</name>
    <name type="synonym">Quamoclit coccinea</name>
    <dbReference type="NCBI Taxonomy" id="28523"/>
    <lineage>
        <taxon>Eukaryota</taxon>
        <taxon>Viridiplantae</taxon>
        <taxon>Streptophyta</taxon>
        <taxon>Embryophyta</taxon>
        <taxon>Tracheophyta</taxon>
        <taxon>Spermatophyta</taxon>
        <taxon>Magnoliopsida</taxon>
        <taxon>eudicotyledons</taxon>
        <taxon>Gunneridae</taxon>
        <taxon>Pentapetalae</taxon>
        <taxon>asterids</taxon>
        <taxon>lamiids</taxon>
        <taxon>Solanales</taxon>
        <taxon>Convolvulaceae</taxon>
        <taxon>Ipomoeeae</taxon>
        <taxon>Ipomoea</taxon>
    </lineage>
</organism>
<proteinExistence type="inferred from homology"/>
<reference key="1">
    <citation type="journal article" date="2002" name="Am. J. Bot.">
        <title>Monophyly of the Convolvulaceae and circumscription of their major lineages based on DNA sequences of multiple chloroplast loci.</title>
        <authorList>
            <person name="Stefanovic S."/>
            <person name="Krueger L."/>
            <person name="Olmstead R.G."/>
        </authorList>
        <dbReference type="AGRICOLA" id="IND23320510"/>
    </citation>
    <scope>NUCLEOTIDE SEQUENCE [GENOMIC DNA]</scope>
</reference>
<keyword id="KW-0150">Chloroplast</keyword>
<keyword id="KW-0472">Membrane</keyword>
<keyword id="KW-0602">Photosynthesis</keyword>
<keyword id="KW-0604">Photosystem II</keyword>
<keyword id="KW-0934">Plastid</keyword>
<keyword id="KW-0674">Reaction center</keyword>
<keyword id="KW-0793">Thylakoid</keyword>
<keyword id="KW-0812">Transmembrane</keyword>
<keyword id="KW-1133">Transmembrane helix</keyword>
<name>PSBL_IPOCC</name>
<protein>
    <recommendedName>
        <fullName evidence="1">Photosystem II reaction center protein L</fullName>
        <shortName evidence="1">PSII-L</shortName>
    </recommendedName>
</protein>
<dbReference type="EMBL" id="AY100853">
    <property type="protein sequence ID" value="AAM55535.1"/>
    <property type="molecule type" value="Genomic_DNA"/>
</dbReference>
<dbReference type="SMR" id="Q7H8L5"/>
<dbReference type="GO" id="GO:0009535">
    <property type="term" value="C:chloroplast thylakoid membrane"/>
    <property type="evidence" value="ECO:0007669"/>
    <property type="project" value="UniProtKB-SubCell"/>
</dbReference>
<dbReference type="GO" id="GO:0009539">
    <property type="term" value="C:photosystem II reaction center"/>
    <property type="evidence" value="ECO:0007669"/>
    <property type="project" value="InterPro"/>
</dbReference>
<dbReference type="GO" id="GO:0015979">
    <property type="term" value="P:photosynthesis"/>
    <property type="evidence" value="ECO:0007669"/>
    <property type="project" value="UniProtKB-UniRule"/>
</dbReference>
<dbReference type="HAMAP" id="MF_01317">
    <property type="entry name" value="PSII_PsbL"/>
    <property type="match status" value="1"/>
</dbReference>
<dbReference type="InterPro" id="IPR003372">
    <property type="entry name" value="PSII_PsbL"/>
</dbReference>
<dbReference type="InterPro" id="IPR037266">
    <property type="entry name" value="PSII_PsbL_sf"/>
</dbReference>
<dbReference type="NCBIfam" id="NF001972">
    <property type="entry name" value="PRK00753.1"/>
    <property type="match status" value="1"/>
</dbReference>
<dbReference type="Pfam" id="PF02419">
    <property type="entry name" value="PsbL"/>
    <property type="match status" value="1"/>
</dbReference>
<dbReference type="SUPFAM" id="SSF161017">
    <property type="entry name" value="Photosystem II reaction center protein L, PsbL"/>
    <property type="match status" value="1"/>
</dbReference>